<feature type="chain" id="PRO_1000061944" description="UPF0761 membrane protein PSPA7_4558">
    <location>
        <begin position="1"/>
        <end position="411"/>
    </location>
</feature>
<feature type="transmembrane region" description="Helical" evidence="1">
    <location>
        <begin position="36"/>
        <end position="56"/>
    </location>
</feature>
<feature type="transmembrane region" description="Helical" evidence="1">
    <location>
        <begin position="92"/>
        <end position="112"/>
    </location>
</feature>
<feature type="transmembrane region" description="Helical" evidence="1">
    <location>
        <begin position="132"/>
        <end position="152"/>
    </location>
</feature>
<feature type="transmembrane region" description="Helical" evidence="1">
    <location>
        <begin position="174"/>
        <end position="194"/>
    </location>
</feature>
<feature type="transmembrane region" description="Helical" evidence="1">
    <location>
        <begin position="207"/>
        <end position="229"/>
    </location>
</feature>
<feature type="transmembrane region" description="Helical" evidence="1">
    <location>
        <begin position="244"/>
        <end position="264"/>
    </location>
</feature>
<organism>
    <name type="scientific">Pseudomonas paraeruginosa (strain DSM 24068 / PA7)</name>
    <name type="common">Pseudomonas aeruginosa (strain PA7)</name>
    <dbReference type="NCBI Taxonomy" id="381754"/>
    <lineage>
        <taxon>Bacteria</taxon>
        <taxon>Pseudomonadati</taxon>
        <taxon>Pseudomonadota</taxon>
        <taxon>Gammaproteobacteria</taxon>
        <taxon>Pseudomonadales</taxon>
        <taxon>Pseudomonadaceae</taxon>
        <taxon>Pseudomonas</taxon>
        <taxon>Pseudomonas paraeruginosa</taxon>
    </lineage>
</organism>
<dbReference type="EMBL" id="CP000744">
    <property type="protein sequence ID" value="ABR84854.1"/>
    <property type="molecule type" value="Genomic_DNA"/>
</dbReference>
<dbReference type="RefSeq" id="WP_012076901.1">
    <property type="nucleotide sequence ID" value="NC_009656.1"/>
</dbReference>
<dbReference type="SMR" id="A6VA22"/>
<dbReference type="KEGG" id="pap:PSPA7_4558"/>
<dbReference type="HOGENOM" id="CLU_032288_1_0_6"/>
<dbReference type="Proteomes" id="UP000001582">
    <property type="component" value="Chromosome"/>
</dbReference>
<dbReference type="GO" id="GO:0005886">
    <property type="term" value="C:plasma membrane"/>
    <property type="evidence" value="ECO:0007669"/>
    <property type="project" value="UniProtKB-SubCell"/>
</dbReference>
<dbReference type="HAMAP" id="MF_00672">
    <property type="entry name" value="UPF0761"/>
    <property type="match status" value="1"/>
</dbReference>
<dbReference type="InterPro" id="IPR023679">
    <property type="entry name" value="UPF0761_bac"/>
</dbReference>
<dbReference type="InterPro" id="IPR017039">
    <property type="entry name" value="Virul_fac_BrkB"/>
</dbReference>
<dbReference type="NCBIfam" id="TIGR00765">
    <property type="entry name" value="yihY_not_rbn"/>
    <property type="match status" value="1"/>
</dbReference>
<dbReference type="PANTHER" id="PTHR30213">
    <property type="entry name" value="INNER MEMBRANE PROTEIN YHJD"/>
    <property type="match status" value="1"/>
</dbReference>
<dbReference type="PANTHER" id="PTHR30213:SF0">
    <property type="entry name" value="UPF0761 MEMBRANE PROTEIN YIHY"/>
    <property type="match status" value="1"/>
</dbReference>
<dbReference type="Pfam" id="PF03631">
    <property type="entry name" value="Virul_fac_BrkB"/>
    <property type="match status" value="1"/>
</dbReference>
<name>Y4558_PSEP7</name>
<protein>
    <recommendedName>
        <fullName evidence="1">UPF0761 membrane protein PSPA7_4558</fullName>
    </recommendedName>
</protein>
<proteinExistence type="inferred from homology"/>
<sequence length="411" mass="46428">MREHFNDGIEFARFLAHRFVTDKAPNSAAALTYTTLFAVVPMMTVMFSMLSLIPAFHGMGESIQTFIFRNFVPSAGEAVETYLKSFTTQARHLTWVGVVFLAVTAFTMLVTIEKAFNEIWRVRQPRRGVGRFLLYWAILSLGPLLLGAGFAVTTYITSLSLLHGPDALPGAETLLGLMPLAFSVAAFTLLYSAVPNARVPVRHALMGGMFTAVLFEAAKTLFGLYVSLFPGYQLIYGAFATVPIFLLWIYLSWMIVLFGAVLVCNLSSSRLWRRRSLPKPIVLLGVLRVFHQRQQLGQSMRLVHLHRAGWLLPEDEWEELLDFLEKEQFVCRVGGGEWVLCRDLGSYSLHRLLNRCPWPMPSRERMPAQLDEAWYPAFQQAMERLQAEQERLFGESLAHWLAEGNASAKVT</sequence>
<reference key="1">
    <citation type="submission" date="2007-06" db="EMBL/GenBank/DDBJ databases">
        <authorList>
            <person name="Dodson R.J."/>
            <person name="Harkins D."/>
            <person name="Paulsen I.T."/>
        </authorList>
    </citation>
    <scope>NUCLEOTIDE SEQUENCE [LARGE SCALE GENOMIC DNA]</scope>
    <source>
        <strain>DSM 24068 / PA7</strain>
    </source>
</reference>
<accession>A6VA22</accession>
<comment type="subcellular location">
    <subcellularLocation>
        <location evidence="1">Cell inner membrane</location>
        <topology evidence="1">Multi-pass membrane protein</topology>
    </subcellularLocation>
</comment>
<comment type="similarity">
    <text evidence="1">Belongs to the UPF0761 family.</text>
</comment>
<gene>
    <name type="ordered locus">PSPA7_4558</name>
</gene>
<keyword id="KW-0997">Cell inner membrane</keyword>
<keyword id="KW-1003">Cell membrane</keyword>
<keyword id="KW-0472">Membrane</keyword>
<keyword id="KW-0812">Transmembrane</keyword>
<keyword id="KW-1133">Transmembrane helix</keyword>
<evidence type="ECO:0000255" key="1">
    <source>
        <dbReference type="HAMAP-Rule" id="MF_00672"/>
    </source>
</evidence>